<proteinExistence type="inferred from homology"/>
<evidence type="ECO:0000255" key="1">
    <source>
        <dbReference type="HAMAP-Rule" id="MF_01227"/>
    </source>
</evidence>
<sequence>MTKNYIFITGGVVSSLGKGIAAASLGAILKARNLNITIIKLDPYINVDPGTISPIQHGEVFVTEDGAETDLDLGHYERFIHTKMTFLNNFTTGGVYSQVLKKERRGDYLGATIQVIPHITNAIKERIILCSENSNIILVEIGGTVGDIESLPFLEAIRQMAVDIGRKNVIYIHLTLVPYIATAGEIKTKPTQHSVKQLLSIGIQPDILICRSEKTVPLHERKKIALFCNVPVDAVISLKDVNSIYKIPKLLKNQKLDDYICNYFKLNVPEADLQEWEEVIYAEKNFNNTIVIGIIGKYIKLPDAYKSVMEALKHAGFKNKIKVDIQLINSQEVENKNFQILKNLNGILIPGGFGDRGIVGKLLSIQYARENHIPYFGICLGMQIAIIEFAQNVVGIKEANSTEFDPQCKYPIIDLIKNRPNNSSKNYNKIENRINLGGTMRLGSQPCKLSANSLSRKLYNQEIIIERHRHRYEVNNLLFKKIEAAGLQVTGRSQKNNVVEIIELSNHPWFLACQFHPEFTSTPRDGHPLFIDFIKSAGKHKKNFI</sequence>
<dbReference type="EC" id="6.3.4.2" evidence="1"/>
<dbReference type="EMBL" id="CP001161">
    <property type="protein sequence ID" value="ACL30765.1"/>
    <property type="molecule type" value="Genomic_DNA"/>
</dbReference>
<dbReference type="RefSeq" id="WP_009874369.1">
    <property type="nucleotide sequence ID" value="NC_011833.1"/>
</dbReference>
<dbReference type="SMR" id="B8D9J4"/>
<dbReference type="KEGG" id="bap:BUAP5A_409"/>
<dbReference type="HOGENOM" id="CLU_011675_5_0_6"/>
<dbReference type="OrthoDB" id="9801107at2"/>
<dbReference type="UniPathway" id="UPA00159">
    <property type="reaction ID" value="UER00277"/>
</dbReference>
<dbReference type="Proteomes" id="UP000006904">
    <property type="component" value="Chromosome"/>
</dbReference>
<dbReference type="GO" id="GO:0005829">
    <property type="term" value="C:cytosol"/>
    <property type="evidence" value="ECO:0007669"/>
    <property type="project" value="TreeGrafter"/>
</dbReference>
<dbReference type="GO" id="GO:0005524">
    <property type="term" value="F:ATP binding"/>
    <property type="evidence" value="ECO:0007669"/>
    <property type="project" value="UniProtKB-KW"/>
</dbReference>
<dbReference type="GO" id="GO:0003883">
    <property type="term" value="F:CTP synthase activity"/>
    <property type="evidence" value="ECO:0007669"/>
    <property type="project" value="UniProtKB-UniRule"/>
</dbReference>
<dbReference type="GO" id="GO:0004359">
    <property type="term" value="F:glutaminase activity"/>
    <property type="evidence" value="ECO:0007669"/>
    <property type="project" value="RHEA"/>
</dbReference>
<dbReference type="GO" id="GO:0042802">
    <property type="term" value="F:identical protein binding"/>
    <property type="evidence" value="ECO:0007669"/>
    <property type="project" value="TreeGrafter"/>
</dbReference>
<dbReference type="GO" id="GO:0046872">
    <property type="term" value="F:metal ion binding"/>
    <property type="evidence" value="ECO:0007669"/>
    <property type="project" value="UniProtKB-KW"/>
</dbReference>
<dbReference type="GO" id="GO:0044210">
    <property type="term" value="P:'de novo' CTP biosynthetic process"/>
    <property type="evidence" value="ECO:0007669"/>
    <property type="project" value="UniProtKB-UniRule"/>
</dbReference>
<dbReference type="GO" id="GO:0019856">
    <property type="term" value="P:pyrimidine nucleobase biosynthetic process"/>
    <property type="evidence" value="ECO:0007669"/>
    <property type="project" value="TreeGrafter"/>
</dbReference>
<dbReference type="CDD" id="cd03113">
    <property type="entry name" value="CTPS_N"/>
    <property type="match status" value="1"/>
</dbReference>
<dbReference type="CDD" id="cd01746">
    <property type="entry name" value="GATase1_CTP_Synthase"/>
    <property type="match status" value="1"/>
</dbReference>
<dbReference type="FunFam" id="3.40.50.300:FF:000009">
    <property type="entry name" value="CTP synthase"/>
    <property type="match status" value="1"/>
</dbReference>
<dbReference type="FunFam" id="3.40.50.880:FF:000002">
    <property type="entry name" value="CTP synthase"/>
    <property type="match status" value="1"/>
</dbReference>
<dbReference type="Gene3D" id="3.40.50.880">
    <property type="match status" value="1"/>
</dbReference>
<dbReference type="Gene3D" id="3.40.50.300">
    <property type="entry name" value="P-loop containing nucleotide triphosphate hydrolases"/>
    <property type="match status" value="1"/>
</dbReference>
<dbReference type="HAMAP" id="MF_01227">
    <property type="entry name" value="PyrG"/>
    <property type="match status" value="1"/>
</dbReference>
<dbReference type="InterPro" id="IPR029062">
    <property type="entry name" value="Class_I_gatase-like"/>
</dbReference>
<dbReference type="InterPro" id="IPR004468">
    <property type="entry name" value="CTP_synthase"/>
</dbReference>
<dbReference type="InterPro" id="IPR017456">
    <property type="entry name" value="CTP_synthase_N"/>
</dbReference>
<dbReference type="InterPro" id="IPR017926">
    <property type="entry name" value="GATASE"/>
</dbReference>
<dbReference type="InterPro" id="IPR033828">
    <property type="entry name" value="GATase1_CTP_Synthase"/>
</dbReference>
<dbReference type="InterPro" id="IPR027417">
    <property type="entry name" value="P-loop_NTPase"/>
</dbReference>
<dbReference type="NCBIfam" id="NF003792">
    <property type="entry name" value="PRK05380.1"/>
    <property type="match status" value="1"/>
</dbReference>
<dbReference type="NCBIfam" id="TIGR00337">
    <property type="entry name" value="PyrG"/>
    <property type="match status" value="1"/>
</dbReference>
<dbReference type="PANTHER" id="PTHR11550">
    <property type="entry name" value="CTP SYNTHASE"/>
    <property type="match status" value="1"/>
</dbReference>
<dbReference type="PANTHER" id="PTHR11550:SF0">
    <property type="entry name" value="CTP SYNTHASE-RELATED"/>
    <property type="match status" value="1"/>
</dbReference>
<dbReference type="Pfam" id="PF06418">
    <property type="entry name" value="CTP_synth_N"/>
    <property type="match status" value="1"/>
</dbReference>
<dbReference type="Pfam" id="PF00117">
    <property type="entry name" value="GATase"/>
    <property type="match status" value="1"/>
</dbReference>
<dbReference type="SUPFAM" id="SSF52317">
    <property type="entry name" value="Class I glutamine amidotransferase-like"/>
    <property type="match status" value="1"/>
</dbReference>
<dbReference type="SUPFAM" id="SSF52540">
    <property type="entry name" value="P-loop containing nucleoside triphosphate hydrolases"/>
    <property type="match status" value="1"/>
</dbReference>
<dbReference type="PROSITE" id="PS51273">
    <property type="entry name" value="GATASE_TYPE_1"/>
    <property type="match status" value="1"/>
</dbReference>
<feature type="chain" id="PRO_1000164931" description="CTP synthase">
    <location>
        <begin position="1"/>
        <end position="545"/>
    </location>
</feature>
<feature type="domain" description="Glutamine amidotransferase type-1" evidence="1">
    <location>
        <begin position="291"/>
        <end position="543"/>
    </location>
</feature>
<feature type="region of interest" description="Amidoligase domain" evidence="1">
    <location>
        <begin position="1"/>
        <end position="266"/>
    </location>
</feature>
<feature type="active site" description="Nucleophile; for glutamine hydrolysis" evidence="1">
    <location>
        <position position="379"/>
    </location>
</feature>
<feature type="active site" evidence="1">
    <location>
        <position position="516"/>
    </location>
</feature>
<feature type="active site" evidence="1">
    <location>
        <position position="518"/>
    </location>
</feature>
<feature type="binding site" evidence="1">
    <location>
        <position position="14"/>
    </location>
    <ligand>
        <name>CTP</name>
        <dbReference type="ChEBI" id="CHEBI:37563"/>
        <note>allosteric inhibitor</note>
    </ligand>
</feature>
<feature type="binding site" evidence="1">
    <location>
        <position position="14"/>
    </location>
    <ligand>
        <name>UTP</name>
        <dbReference type="ChEBI" id="CHEBI:46398"/>
    </ligand>
</feature>
<feature type="binding site" evidence="1">
    <location>
        <begin position="15"/>
        <end position="20"/>
    </location>
    <ligand>
        <name>ATP</name>
        <dbReference type="ChEBI" id="CHEBI:30616"/>
    </ligand>
</feature>
<feature type="binding site" evidence="1">
    <location>
        <position position="72"/>
    </location>
    <ligand>
        <name>ATP</name>
        <dbReference type="ChEBI" id="CHEBI:30616"/>
    </ligand>
</feature>
<feature type="binding site" evidence="1">
    <location>
        <position position="72"/>
    </location>
    <ligand>
        <name>Mg(2+)</name>
        <dbReference type="ChEBI" id="CHEBI:18420"/>
    </ligand>
</feature>
<feature type="binding site" evidence="1">
    <location>
        <position position="140"/>
    </location>
    <ligand>
        <name>Mg(2+)</name>
        <dbReference type="ChEBI" id="CHEBI:18420"/>
    </ligand>
</feature>
<feature type="binding site" evidence="1">
    <location>
        <begin position="147"/>
        <end position="149"/>
    </location>
    <ligand>
        <name>CTP</name>
        <dbReference type="ChEBI" id="CHEBI:37563"/>
        <note>allosteric inhibitor</note>
    </ligand>
</feature>
<feature type="binding site" evidence="1">
    <location>
        <begin position="187"/>
        <end position="192"/>
    </location>
    <ligand>
        <name>CTP</name>
        <dbReference type="ChEBI" id="CHEBI:37563"/>
        <note>allosteric inhibitor</note>
    </ligand>
</feature>
<feature type="binding site" evidence="1">
    <location>
        <begin position="187"/>
        <end position="192"/>
    </location>
    <ligand>
        <name>UTP</name>
        <dbReference type="ChEBI" id="CHEBI:46398"/>
    </ligand>
</feature>
<feature type="binding site" evidence="1">
    <location>
        <position position="223"/>
    </location>
    <ligand>
        <name>CTP</name>
        <dbReference type="ChEBI" id="CHEBI:37563"/>
        <note>allosteric inhibitor</note>
    </ligand>
</feature>
<feature type="binding site" evidence="1">
    <location>
        <position position="223"/>
    </location>
    <ligand>
        <name>UTP</name>
        <dbReference type="ChEBI" id="CHEBI:46398"/>
    </ligand>
</feature>
<feature type="binding site" evidence="1">
    <location>
        <begin position="239"/>
        <end position="241"/>
    </location>
    <ligand>
        <name>ATP</name>
        <dbReference type="ChEBI" id="CHEBI:30616"/>
    </ligand>
</feature>
<feature type="binding site" evidence="1">
    <location>
        <position position="352"/>
    </location>
    <ligand>
        <name>L-glutamine</name>
        <dbReference type="ChEBI" id="CHEBI:58359"/>
    </ligand>
</feature>
<feature type="binding site" evidence="1">
    <location>
        <begin position="380"/>
        <end position="383"/>
    </location>
    <ligand>
        <name>L-glutamine</name>
        <dbReference type="ChEBI" id="CHEBI:58359"/>
    </ligand>
</feature>
<feature type="binding site" evidence="1">
    <location>
        <position position="403"/>
    </location>
    <ligand>
        <name>L-glutamine</name>
        <dbReference type="ChEBI" id="CHEBI:58359"/>
    </ligand>
</feature>
<feature type="binding site" evidence="1">
    <location>
        <position position="471"/>
    </location>
    <ligand>
        <name>L-glutamine</name>
        <dbReference type="ChEBI" id="CHEBI:58359"/>
    </ligand>
</feature>
<keyword id="KW-0067">ATP-binding</keyword>
<keyword id="KW-0315">Glutamine amidotransferase</keyword>
<keyword id="KW-0436">Ligase</keyword>
<keyword id="KW-0460">Magnesium</keyword>
<keyword id="KW-0479">Metal-binding</keyword>
<keyword id="KW-0547">Nucleotide-binding</keyword>
<keyword id="KW-0665">Pyrimidine biosynthesis</keyword>
<protein>
    <recommendedName>
        <fullName evidence="1">CTP synthase</fullName>
        <ecNumber evidence="1">6.3.4.2</ecNumber>
    </recommendedName>
    <alternativeName>
        <fullName evidence="1">Cytidine 5'-triphosphate synthase</fullName>
    </alternativeName>
    <alternativeName>
        <fullName evidence="1">Cytidine triphosphate synthetase</fullName>
        <shortName evidence="1">CTP synthetase</shortName>
        <shortName evidence="1">CTPS</shortName>
    </alternativeName>
    <alternativeName>
        <fullName evidence="1">UTP--ammonia ligase</fullName>
    </alternativeName>
</protein>
<reference key="1">
    <citation type="journal article" date="2009" name="Science">
        <title>The dynamics and time scale of ongoing genomic erosion in symbiotic bacteria.</title>
        <authorList>
            <person name="Moran N.A."/>
            <person name="McLaughlin H.J."/>
            <person name="Sorek R."/>
        </authorList>
    </citation>
    <scope>NUCLEOTIDE SEQUENCE [LARGE SCALE GENOMIC DNA]</scope>
    <source>
        <strain>5A</strain>
    </source>
</reference>
<name>PYRG_BUCA5</name>
<organism>
    <name type="scientific">Buchnera aphidicola subsp. Acyrthosiphon pisum (strain 5A)</name>
    <dbReference type="NCBI Taxonomy" id="563178"/>
    <lineage>
        <taxon>Bacteria</taxon>
        <taxon>Pseudomonadati</taxon>
        <taxon>Pseudomonadota</taxon>
        <taxon>Gammaproteobacteria</taxon>
        <taxon>Enterobacterales</taxon>
        <taxon>Erwiniaceae</taxon>
        <taxon>Buchnera</taxon>
    </lineage>
</organism>
<gene>
    <name evidence="1" type="primary">pyrG</name>
    <name type="ordered locus">BUAP5A_409</name>
</gene>
<comment type="function">
    <text evidence="1">Catalyzes the ATP-dependent amination of UTP to CTP with either L-glutamine or ammonia as the source of nitrogen. Regulates intracellular CTP levels through interactions with the four ribonucleotide triphosphates.</text>
</comment>
<comment type="catalytic activity">
    <reaction evidence="1">
        <text>UTP + L-glutamine + ATP + H2O = CTP + L-glutamate + ADP + phosphate + 2 H(+)</text>
        <dbReference type="Rhea" id="RHEA:26426"/>
        <dbReference type="ChEBI" id="CHEBI:15377"/>
        <dbReference type="ChEBI" id="CHEBI:15378"/>
        <dbReference type="ChEBI" id="CHEBI:29985"/>
        <dbReference type="ChEBI" id="CHEBI:30616"/>
        <dbReference type="ChEBI" id="CHEBI:37563"/>
        <dbReference type="ChEBI" id="CHEBI:43474"/>
        <dbReference type="ChEBI" id="CHEBI:46398"/>
        <dbReference type="ChEBI" id="CHEBI:58359"/>
        <dbReference type="ChEBI" id="CHEBI:456216"/>
        <dbReference type="EC" id="6.3.4.2"/>
    </reaction>
</comment>
<comment type="catalytic activity">
    <reaction evidence="1">
        <text>L-glutamine + H2O = L-glutamate + NH4(+)</text>
        <dbReference type="Rhea" id="RHEA:15889"/>
        <dbReference type="ChEBI" id="CHEBI:15377"/>
        <dbReference type="ChEBI" id="CHEBI:28938"/>
        <dbReference type="ChEBI" id="CHEBI:29985"/>
        <dbReference type="ChEBI" id="CHEBI:58359"/>
    </reaction>
</comment>
<comment type="catalytic activity">
    <reaction evidence="1">
        <text>UTP + NH4(+) + ATP = CTP + ADP + phosphate + 2 H(+)</text>
        <dbReference type="Rhea" id="RHEA:16597"/>
        <dbReference type="ChEBI" id="CHEBI:15378"/>
        <dbReference type="ChEBI" id="CHEBI:28938"/>
        <dbReference type="ChEBI" id="CHEBI:30616"/>
        <dbReference type="ChEBI" id="CHEBI:37563"/>
        <dbReference type="ChEBI" id="CHEBI:43474"/>
        <dbReference type="ChEBI" id="CHEBI:46398"/>
        <dbReference type="ChEBI" id="CHEBI:456216"/>
    </reaction>
</comment>
<comment type="activity regulation">
    <text evidence="1">Allosterically activated by GTP, when glutamine is the substrate; GTP has no effect on the reaction when ammonia is the substrate. The allosteric effector GTP functions by stabilizing the protein conformation that binds the tetrahedral intermediate(s) formed during glutamine hydrolysis. Inhibited by the product CTP, via allosteric rather than competitive inhibition.</text>
</comment>
<comment type="pathway">
    <text evidence="1">Pyrimidine metabolism; CTP biosynthesis via de novo pathway; CTP from UDP: step 2/2.</text>
</comment>
<comment type="subunit">
    <text evidence="1">Homotetramer.</text>
</comment>
<comment type="miscellaneous">
    <text evidence="1">CTPSs have evolved a hybrid strategy for distinguishing between UTP and CTP. The overlapping regions of the product feedback inhibitory and substrate sites recognize a common feature in both compounds, the triphosphate moiety. To differentiate isosteric substrate and product pyrimidine rings, an additional pocket far from the expected kinase/ligase catalytic site, specifically recognizes the cytosine and ribose portions of the product inhibitor.</text>
</comment>
<comment type="similarity">
    <text evidence="1">Belongs to the CTP synthase family.</text>
</comment>
<accession>B8D9J4</accession>